<feature type="chain" id="PRO_0000454379" description="Guanylate-binding protein 7">
    <location>
        <begin position="1"/>
        <end position="638"/>
    </location>
</feature>
<feature type="domain" description="GB1/RHD3-type G" evidence="3">
    <location>
        <begin position="35"/>
        <end position="277"/>
    </location>
</feature>
<feature type="region of interest" description="GTPase domain (Globular)" evidence="1">
    <location>
        <begin position="1"/>
        <end position="310"/>
    </location>
</feature>
<feature type="region of interest" description="Interaction with the CYBA-CYBB complex" evidence="5">
    <location>
        <begin position="311"/>
        <end position="638"/>
    </location>
</feature>
<feature type="region of interest" description="C-terminal tail; required for its localization to cytoplasmic vesicle" evidence="7">
    <location>
        <begin position="590"/>
        <end position="638"/>
    </location>
</feature>
<feature type="binding site" evidence="11 12">
    <location>
        <begin position="45"/>
        <end position="52"/>
    </location>
    <ligand>
        <name>GTP</name>
        <dbReference type="ChEBI" id="CHEBI:37565"/>
    </ligand>
</feature>
<feature type="binding site" evidence="1">
    <location>
        <begin position="67"/>
        <end position="69"/>
    </location>
    <ligand>
        <name>GTP</name>
        <dbReference type="ChEBI" id="CHEBI:37565"/>
    </ligand>
</feature>
<feature type="binding site" evidence="1">
    <location>
        <begin position="97"/>
        <end position="101"/>
    </location>
    <ligand>
        <name>GTP</name>
        <dbReference type="ChEBI" id="CHEBI:37565"/>
    </ligand>
</feature>
<feature type="mutagenesis site" description="Loss of localization to cytoplasmic vesicle." evidence="5">
    <original>R</original>
    <variation>P</variation>
    <location>
        <position position="48"/>
    </location>
</feature>
<feature type="mutagenesis site" description="Loss of catalytic activity." evidence="7">
    <original>K</original>
    <variation>A</variation>
    <location>
        <position position="51"/>
    </location>
</feature>
<feature type="mutagenesis site" description="Loss of catalytic activity and localization to cytoplasmic vesicle." evidence="5">
    <original>S</original>
    <variation>N</variation>
    <location>
        <position position="52"/>
    </location>
</feature>
<organism>
    <name type="scientific">Mus musculus</name>
    <name type="common">Mouse</name>
    <dbReference type="NCBI Taxonomy" id="10090"/>
    <lineage>
        <taxon>Eukaryota</taxon>
        <taxon>Metazoa</taxon>
        <taxon>Chordata</taxon>
        <taxon>Craniata</taxon>
        <taxon>Vertebrata</taxon>
        <taxon>Euteleostomi</taxon>
        <taxon>Mammalia</taxon>
        <taxon>Eutheria</taxon>
        <taxon>Euarchontoglires</taxon>
        <taxon>Glires</taxon>
        <taxon>Rodentia</taxon>
        <taxon>Myomorpha</taxon>
        <taxon>Muroidea</taxon>
        <taxon>Muridae</taxon>
        <taxon>Murinae</taxon>
        <taxon>Mus</taxon>
        <taxon>Mus</taxon>
    </lineage>
</organism>
<reference key="1">
    <citation type="journal article" date="2004" name="DNA Res.">
        <title>Prediction of the coding sequences of mouse homologues of FLJ genes: the complete nucleotide sequences of 110 mouse FLJ-homologous cDNAs identified by screening of terminal sequences of cDNA clones randomly sampled from size-fractionated libraries.</title>
        <authorList>
            <person name="Okazaki N."/>
            <person name="Kikuno R."/>
            <person name="Ohara R."/>
            <person name="Inamoto S."/>
            <person name="Koseki H."/>
            <person name="Hiraoka S."/>
            <person name="Saga Y."/>
            <person name="Kitamura H."/>
            <person name="Nakagawa T."/>
            <person name="Nagase T."/>
            <person name="Ohara O."/>
            <person name="Koga H."/>
        </authorList>
    </citation>
    <scope>NUCLEOTIDE SEQUENCE [LARGE SCALE MRNA]</scope>
    <source>
        <tissue>Embryonic tail</tissue>
    </source>
</reference>
<reference key="2">
    <citation type="journal article" date="2005" name="Science">
        <title>The transcriptional landscape of the mammalian genome.</title>
        <authorList>
            <person name="Carninci P."/>
            <person name="Kasukawa T."/>
            <person name="Katayama S."/>
            <person name="Gough J."/>
            <person name="Frith M.C."/>
            <person name="Maeda N."/>
            <person name="Oyama R."/>
            <person name="Ravasi T."/>
            <person name="Lenhard B."/>
            <person name="Wells C."/>
            <person name="Kodzius R."/>
            <person name="Shimokawa K."/>
            <person name="Bajic V.B."/>
            <person name="Brenner S.E."/>
            <person name="Batalov S."/>
            <person name="Forrest A.R."/>
            <person name="Zavolan M."/>
            <person name="Davis M.J."/>
            <person name="Wilming L.G."/>
            <person name="Aidinis V."/>
            <person name="Allen J.E."/>
            <person name="Ambesi-Impiombato A."/>
            <person name="Apweiler R."/>
            <person name="Aturaliya R.N."/>
            <person name="Bailey T.L."/>
            <person name="Bansal M."/>
            <person name="Baxter L."/>
            <person name="Beisel K.W."/>
            <person name="Bersano T."/>
            <person name="Bono H."/>
            <person name="Chalk A.M."/>
            <person name="Chiu K.P."/>
            <person name="Choudhary V."/>
            <person name="Christoffels A."/>
            <person name="Clutterbuck D.R."/>
            <person name="Crowe M.L."/>
            <person name="Dalla E."/>
            <person name="Dalrymple B.P."/>
            <person name="de Bono B."/>
            <person name="Della Gatta G."/>
            <person name="di Bernardo D."/>
            <person name="Down T."/>
            <person name="Engstrom P."/>
            <person name="Fagiolini M."/>
            <person name="Faulkner G."/>
            <person name="Fletcher C.F."/>
            <person name="Fukushima T."/>
            <person name="Furuno M."/>
            <person name="Futaki S."/>
            <person name="Gariboldi M."/>
            <person name="Georgii-Hemming P."/>
            <person name="Gingeras T.R."/>
            <person name="Gojobori T."/>
            <person name="Green R.E."/>
            <person name="Gustincich S."/>
            <person name="Harbers M."/>
            <person name="Hayashi Y."/>
            <person name="Hensch T.K."/>
            <person name="Hirokawa N."/>
            <person name="Hill D."/>
            <person name="Huminiecki L."/>
            <person name="Iacono M."/>
            <person name="Ikeo K."/>
            <person name="Iwama A."/>
            <person name="Ishikawa T."/>
            <person name="Jakt M."/>
            <person name="Kanapin A."/>
            <person name="Katoh M."/>
            <person name="Kawasawa Y."/>
            <person name="Kelso J."/>
            <person name="Kitamura H."/>
            <person name="Kitano H."/>
            <person name="Kollias G."/>
            <person name="Krishnan S.P."/>
            <person name="Kruger A."/>
            <person name="Kummerfeld S.K."/>
            <person name="Kurochkin I.V."/>
            <person name="Lareau L.F."/>
            <person name="Lazarevic D."/>
            <person name="Lipovich L."/>
            <person name="Liu J."/>
            <person name="Liuni S."/>
            <person name="McWilliam S."/>
            <person name="Madan Babu M."/>
            <person name="Madera M."/>
            <person name="Marchionni L."/>
            <person name="Matsuda H."/>
            <person name="Matsuzawa S."/>
            <person name="Miki H."/>
            <person name="Mignone F."/>
            <person name="Miyake S."/>
            <person name="Morris K."/>
            <person name="Mottagui-Tabar S."/>
            <person name="Mulder N."/>
            <person name="Nakano N."/>
            <person name="Nakauchi H."/>
            <person name="Ng P."/>
            <person name="Nilsson R."/>
            <person name="Nishiguchi S."/>
            <person name="Nishikawa S."/>
            <person name="Nori F."/>
            <person name="Ohara O."/>
            <person name="Okazaki Y."/>
            <person name="Orlando V."/>
            <person name="Pang K.C."/>
            <person name="Pavan W.J."/>
            <person name="Pavesi G."/>
            <person name="Pesole G."/>
            <person name="Petrovsky N."/>
            <person name="Piazza S."/>
            <person name="Reed J."/>
            <person name="Reid J.F."/>
            <person name="Ring B.Z."/>
            <person name="Ringwald M."/>
            <person name="Rost B."/>
            <person name="Ruan Y."/>
            <person name="Salzberg S.L."/>
            <person name="Sandelin A."/>
            <person name="Schneider C."/>
            <person name="Schoenbach C."/>
            <person name="Sekiguchi K."/>
            <person name="Semple C.A."/>
            <person name="Seno S."/>
            <person name="Sessa L."/>
            <person name="Sheng Y."/>
            <person name="Shibata Y."/>
            <person name="Shimada H."/>
            <person name="Shimada K."/>
            <person name="Silva D."/>
            <person name="Sinclair B."/>
            <person name="Sperling S."/>
            <person name="Stupka E."/>
            <person name="Sugiura K."/>
            <person name="Sultana R."/>
            <person name="Takenaka Y."/>
            <person name="Taki K."/>
            <person name="Tammoja K."/>
            <person name="Tan S.L."/>
            <person name="Tang S."/>
            <person name="Taylor M.S."/>
            <person name="Tegner J."/>
            <person name="Teichmann S.A."/>
            <person name="Ueda H.R."/>
            <person name="van Nimwegen E."/>
            <person name="Verardo R."/>
            <person name="Wei C.L."/>
            <person name="Yagi K."/>
            <person name="Yamanishi H."/>
            <person name="Zabarovsky E."/>
            <person name="Zhu S."/>
            <person name="Zimmer A."/>
            <person name="Hide W."/>
            <person name="Bult C."/>
            <person name="Grimmond S.M."/>
            <person name="Teasdale R.D."/>
            <person name="Liu E.T."/>
            <person name="Brusic V."/>
            <person name="Quackenbush J."/>
            <person name="Wahlestedt C."/>
            <person name="Mattick J.S."/>
            <person name="Hume D.A."/>
            <person name="Kai C."/>
            <person name="Sasaki D."/>
            <person name="Tomaru Y."/>
            <person name="Fukuda S."/>
            <person name="Kanamori-Katayama M."/>
            <person name="Suzuki M."/>
            <person name="Aoki J."/>
            <person name="Arakawa T."/>
            <person name="Iida J."/>
            <person name="Imamura K."/>
            <person name="Itoh M."/>
            <person name="Kato T."/>
            <person name="Kawaji H."/>
            <person name="Kawagashira N."/>
            <person name="Kawashima T."/>
            <person name="Kojima M."/>
            <person name="Kondo S."/>
            <person name="Konno H."/>
            <person name="Nakano K."/>
            <person name="Ninomiya N."/>
            <person name="Nishio T."/>
            <person name="Okada M."/>
            <person name="Plessy C."/>
            <person name="Shibata K."/>
            <person name="Shiraki T."/>
            <person name="Suzuki S."/>
            <person name="Tagami M."/>
            <person name="Waki K."/>
            <person name="Watahiki A."/>
            <person name="Okamura-Oho Y."/>
            <person name="Suzuki H."/>
            <person name="Kawai J."/>
            <person name="Hayashizaki Y."/>
        </authorList>
    </citation>
    <scope>NUCLEOTIDE SEQUENCE [LARGE SCALE MRNA]</scope>
    <source>
        <strain>C57BL/6J</strain>
        <tissue>Bone</tissue>
        <tissue>Ovary</tissue>
    </source>
</reference>
<reference key="3">
    <citation type="journal article" date="2009" name="PLoS Biol.">
        <title>Lineage-specific biology revealed by a finished genome assembly of the mouse.</title>
        <authorList>
            <person name="Church D.M."/>
            <person name="Goodstadt L."/>
            <person name="Hillier L.W."/>
            <person name="Zody M.C."/>
            <person name="Goldstein S."/>
            <person name="She X."/>
            <person name="Bult C.J."/>
            <person name="Agarwala R."/>
            <person name="Cherry J.L."/>
            <person name="DiCuccio M."/>
            <person name="Hlavina W."/>
            <person name="Kapustin Y."/>
            <person name="Meric P."/>
            <person name="Maglott D."/>
            <person name="Birtle Z."/>
            <person name="Marques A.C."/>
            <person name="Graves T."/>
            <person name="Zhou S."/>
            <person name="Teague B."/>
            <person name="Potamousis K."/>
            <person name="Churas C."/>
            <person name="Place M."/>
            <person name="Herschleb J."/>
            <person name="Runnheim R."/>
            <person name="Forrest D."/>
            <person name="Amos-Landgraf J."/>
            <person name="Schwartz D.C."/>
            <person name="Cheng Z."/>
            <person name="Lindblad-Toh K."/>
            <person name="Eichler E.E."/>
            <person name="Ponting C.P."/>
        </authorList>
    </citation>
    <scope>NUCLEOTIDE SEQUENCE [LARGE SCALE GENOMIC DNA]</scope>
    <source>
        <strain>C57BL/6J</strain>
    </source>
</reference>
<reference key="4">
    <citation type="journal article" date="2004" name="Genome Res.">
        <title>The status, quality, and expansion of the NIH full-length cDNA project: the Mammalian Gene Collection (MGC).</title>
        <authorList>
            <consortium name="The MGC Project Team"/>
        </authorList>
    </citation>
    <scope>NUCLEOTIDE SEQUENCE [LARGE SCALE MRNA]</scope>
    <source>
        <strain>Czech II</strain>
        <tissue>Mammary tumor</tissue>
    </source>
</reference>
<reference key="5">
    <citation type="journal article" date="2007" name="J. Immunol.">
        <title>Extensive characterization of IFN-induced GTPases mGBP1 to mGBP10 involved in host defense.</title>
        <authorList>
            <person name="Degrandi D."/>
            <person name="Konermann C."/>
            <person name="Beuter-Gunia C."/>
            <person name="Kresse A."/>
            <person name="Wurthner J."/>
            <person name="Kurig S."/>
            <person name="Beer S."/>
            <person name="Pfeffer K."/>
        </authorList>
    </citation>
    <scope>IDENTIFICATION</scope>
    <scope>FUNCTION</scope>
    <scope>INDUCTION</scope>
    <scope>SUBCELLULAR LOCATION</scope>
    <source>
        <strain>C57BL/6J</strain>
    </source>
</reference>
<reference key="6">
    <citation type="journal article" date="2010" name="Cell">
        <title>A tissue-specific atlas of mouse protein phosphorylation and expression.</title>
        <authorList>
            <person name="Huttlin E.L."/>
            <person name="Jedrychowski M.P."/>
            <person name="Elias J.E."/>
            <person name="Goswami T."/>
            <person name="Rad R."/>
            <person name="Beausoleil S.A."/>
            <person name="Villen J."/>
            <person name="Haas W."/>
            <person name="Sowa M.E."/>
            <person name="Gygi S.P."/>
        </authorList>
    </citation>
    <scope>IDENTIFICATION BY MASS SPECTROMETRY [LARGE SCALE ANALYSIS]</scope>
</reference>
<reference key="7">
    <citation type="journal article" date="2011" name="Science">
        <title>A family of IFN-gamma-inducible 65-kD GTPases protects against bacterial infection.</title>
        <authorList>
            <person name="Kim B.H."/>
            <person name="Shenoy A.R."/>
            <person name="Kumar P."/>
            <person name="Das R."/>
            <person name="Tiwari S."/>
            <person name="MacMicking J.D."/>
        </authorList>
    </citation>
    <scope>FUNCTION</scope>
    <scope>CATALYTIC ACTIVITY</scope>
    <scope>SUBCELLULAR LOCATION</scope>
    <scope>INTERACTION WITH NCF2; NCF2-NCF4 COMPLEX; CYBA; CYBA-CYBB COMPLEX AND ATG4B</scope>
    <scope>MUTAGENESIS OF ARG-48 AND SER-52</scope>
</reference>
<reference key="8">
    <citation type="journal article" date="2019" name="Biochem. J.">
        <title>Biochemical and structural characterization of murine GBP7, a guanylate binding protein with an elongated C-terminal tail.</title>
        <authorList>
            <person name="Legewie L."/>
            <person name="Loschwitz J."/>
            <person name="Steffens N."/>
            <person name="Prescher M."/>
            <person name="Wang X."/>
            <person name="Smits S.H.J."/>
            <person name="Schmitt L."/>
            <person name="Strodel B."/>
            <person name="Degrandi D."/>
            <person name="Pfeffer K."/>
        </authorList>
    </citation>
    <scope>FUNCTION</scope>
    <scope>CATALYTIC ACTIVITY</scope>
    <scope>SUBUNIT</scope>
    <scope>BIOPHYSICOCHEMICAL PROPERTIES</scope>
    <scope>SUBCELLULAR LOCATION</scope>
    <scope>ACTIVITY REGULATION</scope>
    <scope>MUTAGENESIS OF LYS-51</scope>
</reference>
<reference key="9">
    <citation type="journal article" date="2020" name="MBio">
        <title>Essential Role of mGBP7 for Survival of Toxoplasma gondii Infection.</title>
        <authorList>
            <person name="Steffens N."/>
            <person name="Beuter-Gunia C."/>
            <person name="Kravets E."/>
            <person name="Reich A."/>
            <person name="Legewie L."/>
            <person name="Pfeffer K."/>
            <person name="Degrandi D."/>
        </authorList>
    </citation>
    <scope>FUNCTION</scope>
    <scope>DISRUPTION PHENOTYPE</scope>
    <scope>SUBCELLULAR LOCATION</scope>
</reference>
<reference key="10">
    <citation type="journal article" date="2021" name="J. Virol.">
        <title>Inducible Guanylate-Binding Protein 7 Facilitates Influenza A Virus Replication by Suppressing Innate Immunity via NF-kappaB and JAK-STAT Signaling Pathways.</title>
        <authorList>
            <person name="Feng M."/>
            <person name="Zhang Q."/>
            <person name="Wu W."/>
            <person name="Chen L."/>
            <person name="Gu S."/>
            <person name="Ye Y."/>
            <person name="Zhong Y."/>
            <person name="Huang Q."/>
            <person name="Liu S."/>
        </authorList>
    </citation>
    <scope>INDUCTION</scope>
</reference>
<reference key="11">
    <citation type="journal article" date="2014" name="Nature">
        <title>Caspase-11 activation requires lysis of pathogen-containing vacuoles by IFN-induced GTPases.</title>
        <authorList>
            <person name="Meunier E."/>
            <person name="Dick M.S."/>
            <person name="Dreier R.F."/>
            <person name="Schuermann N."/>
            <person name="Kenzelmann Broz D."/>
            <person name="Warming S."/>
            <person name="Roose-Girma M."/>
            <person name="Bumann D."/>
            <person name="Kayagaki N."/>
            <person name="Takeda K."/>
            <person name="Yamamoto M."/>
            <person name="Broz P."/>
        </authorList>
    </citation>
    <scope>FUNCTION</scope>
</reference>
<keyword id="KW-0929">Antimicrobial</keyword>
<keyword id="KW-0051">Antiviral defense</keyword>
<keyword id="KW-0968">Cytoplasmic vesicle</keyword>
<keyword id="KW-0342">GTP-binding</keyword>
<keyword id="KW-0378">Hydrolase</keyword>
<keyword id="KW-0391">Immunity</keyword>
<keyword id="KW-0399">Innate immunity</keyword>
<keyword id="KW-0472">Membrane</keyword>
<keyword id="KW-0547">Nucleotide-binding</keyword>
<keyword id="KW-1185">Reference proteome</keyword>
<evidence type="ECO:0000250" key="1">
    <source>
        <dbReference type="UniProtKB" id="P32455"/>
    </source>
</evidence>
<evidence type="ECO:0000250" key="2">
    <source>
        <dbReference type="UniProtKB" id="Q8N8V2"/>
    </source>
</evidence>
<evidence type="ECO:0000255" key="3">
    <source>
        <dbReference type="PROSITE-ProRule" id="PRU01052"/>
    </source>
</evidence>
<evidence type="ECO:0000269" key="4">
    <source>
    </source>
</evidence>
<evidence type="ECO:0000269" key="5">
    <source>
    </source>
</evidence>
<evidence type="ECO:0000269" key="6">
    <source>
    </source>
</evidence>
<evidence type="ECO:0000269" key="7">
    <source>
    </source>
</evidence>
<evidence type="ECO:0000269" key="8">
    <source>
    </source>
</evidence>
<evidence type="ECO:0000269" key="9">
    <source>
    </source>
</evidence>
<evidence type="ECO:0000305" key="10"/>
<evidence type="ECO:0000305" key="11">
    <source>
    </source>
</evidence>
<evidence type="ECO:0000305" key="12">
    <source>
    </source>
</evidence>
<dbReference type="EC" id="3.6.1.-" evidence="5 7"/>
<dbReference type="EC" id="3.6.5.-" evidence="5 7"/>
<dbReference type="EMBL" id="AK087751">
    <property type="protein sequence ID" value="BAC39989.1"/>
    <property type="molecule type" value="mRNA"/>
</dbReference>
<dbReference type="EMBL" id="AK131176">
    <property type="protein sequence ID" value="BAD21426.1"/>
    <property type="status" value="ALT_INIT"/>
    <property type="molecule type" value="mRNA"/>
</dbReference>
<dbReference type="EMBL" id="AK036666">
    <property type="protein sequence ID" value="BAC29526.1"/>
    <property type="status" value="ALT_INIT"/>
    <property type="molecule type" value="mRNA"/>
</dbReference>
<dbReference type="EMBL" id="GL456099">
    <property type="status" value="NOT_ANNOTATED_CDS"/>
    <property type="molecule type" value="Genomic_DNA"/>
</dbReference>
<dbReference type="EMBL" id="BC010229">
    <property type="protein sequence ID" value="AAH10229.2"/>
    <property type="molecule type" value="mRNA"/>
</dbReference>
<dbReference type="EMBL" id="BK005760">
    <property type="protein sequence ID" value="DAA05846.1"/>
    <property type="molecule type" value="mRNA"/>
</dbReference>
<dbReference type="CCDS" id="CCDS38657.1"/>
<dbReference type="RefSeq" id="NP_001076781.1">
    <property type="nucleotide sequence ID" value="NM_001083312.2"/>
</dbReference>
<dbReference type="RefSeq" id="NP_663520.2">
    <property type="nucleotide sequence ID" value="NM_145545.4"/>
</dbReference>
<dbReference type="SASBDB" id="Q91Z40"/>
<dbReference type="SMR" id="Q91Z40"/>
<dbReference type="FunCoup" id="Q91Z40">
    <property type="interactions" value="20"/>
</dbReference>
<dbReference type="STRING" id="10090.ENSMUSP00000049104"/>
<dbReference type="iPTMnet" id="Q91Z40"/>
<dbReference type="PhosphoSitePlus" id="Q91Z40"/>
<dbReference type="SwissPalm" id="Q91Z40"/>
<dbReference type="jPOST" id="Q91Z40"/>
<dbReference type="PaxDb" id="10090-ENSMUSP00000049104"/>
<dbReference type="ProteomicsDB" id="343543"/>
<dbReference type="DNASU" id="229900"/>
<dbReference type="Ensembl" id="ENSMUST00000045097.11">
    <property type="protein sequence ID" value="ENSMUSP00000049104.10"/>
    <property type="gene ID" value="ENSMUSG00000040253.16"/>
</dbReference>
<dbReference type="Ensembl" id="ENSMUST00000171263.8">
    <property type="protein sequence ID" value="ENSMUSP00000132970.2"/>
    <property type="gene ID" value="ENSMUSG00000040253.16"/>
</dbReference>
<dbReference type="GeneID" id="229900"/>
<dbReference type="KEGG" id="mmu:229900"/>
<dbReference type="UCSC" id="uc008ros.2">
    <property type="organism name" value="mouse"/>
</dbReference>
<dbReference type="AGR" id="MGI:2444421"/>
<dbReference type="CTD" id="388646"/>
<dbReference type="MGI" id="MGI:2444421">
    <property type="gene designation" value="Gbp7"/>
</dbReference>
<dbReference type="VEuPathDB" id="HostDB:ENSMUSG00000040253"/>
<dbReference type="eggNOG" id="KOG2037">
    <property type="taxonomic scope" value="Eukaryota"/>
</dbReference>
<dbReference type="GeneTree" id="ENSGT00940000163522"/>
<dbReference type="HOGENOM" id="CLU_018608_2_1_1"/>
<dbReference type="InParanoid" id="Q91Z40"/>
<dbReference type="OMA" id="IMMLEHT"/>
<dbReference type="OrthoDB" id="2135133at2759"/>
<dbReference type="PhylomeDB" id="Q91Z40"/>
<dbReference type="TreeFam" id="TF331602"/>
<dbReference type="BioGRID-ORCS" id="229900">
    <property type="hits" value="3 hits in 76 CRISPR screens"/>
</dbReference>
<dbReference type="ChiTaRS" id="Gbp7">
    <property type="organism name" value="mouse"/>
</dbReference>
<dbReference type="PRO" id="PR:Q91Z40"/>
<dbReference type="Proteomes" id="UP000000589">
    <property type="component" value="Chromosome 3"/>
</dbReference>
<dbReference type="RNAct" id="Q91Z40">
    <property type="molecule type" value="protein"/>
</dbReference>
<dbReference type="Bgee" id="ENSMUSG00000040253">
    <property type="expression patterns" value="Expressed in interventricular septum and 149 other cell types or tissues"/>
</dbReference>
<dbReference type="GO" id="GO:0031410">
    <property type="term" value="C:cytoplasmic vesicle"/>
    <property type="evidence" value="ECO:0000314"/>
    <property type="project" value="UniProtKB"/>
</dbReference>
<dbReference type="GO" id="GO:0030659">
    <property type="term" value="C:cytoplasmic vesicle membrane"/>
    <property type="evidence" value="ECO:0007669"/>
    <property type="project" value="UniProtKB-SubCell"/>
</dbReference>
<dbReference type="GO" id="GO:0020005">
    <property type="term" value="C:symbiont-containing vacuole membrane"/>
    <property type="evidence" value="ECO:0000314"/>
    <property type="project" value="MGI"/>
</dbReference>
<dbReference type="GO" id="GO:0005525">
    <property type="term" value="F:GTP binding"/>
    <property type="evidence" value="ECO:0000315"/>
    <property type="project" value="UniProtKB"/>
</dbReference>
<dbReference type="GO" id="GO:0003924">
    <property type="term" value="F:GTPase activity"/>
    <property type="evidence" value="ECO:0000315"/>
    <property type="project" value="UniProtKB"/>
</dbReference>
<dbReference type="GO" id="GO:0002218">
    <property type="term" value="P:activation of innate immune response"/>
    <property type="evidence" value="ECO:0000315"/>
    <property type="project" value="UniProtKB"/>
</dbReference>
<dbReference type="GO" id="GO:0044406">
    <property type="term" value="P:adhesion of symbiont to host"/>
    <property type="evidence" value="ECO:0000314"/>
    <property type="project" value="MGI"/>
</dbReference>
<dbReference type="GO" id="GO:0035458">
    <property type="term" value="P:cellular response to interferon-beta"/>
    <property type="evidence" value="ECO:0000314"/>
    <property type="project" value="UniProtKB"/>
</dbReference>
<dbReference type="GO" id="GO:0071346">
    <property type="term" value="P:cellular response to type II interferon"/>
    <property type="evidence" value="ECO:0000314"/>
    <property type="project" value="MGI"/>
</dbReference>
<dbReference type="GO" id="GO:0051715">
    <property type="term" value="P:cytolysis in another organism"/>
    <property type="evidence" value="ECO:0000315"/>
    <property type="project" value="UniProtKB"/>
</dbReference>
<dbReference type="GO" id="GO:0042742">
    <property type="term" value="P:defense response to bacterium"/>
    <property type="evidence" value="ECO:0000315"/>
    <property type="project" value="UniProtKB"/>
</dbReference>
<dbReference type="GO" id="GO:0050830">
    <property type="term" value="P:defense response to Gram-positive bacterium"/>
    <property type="evidence" value="ECO:0000314"/>
    <property type="project" value="MGI"/>
</dbReference>
<dbReference type="GO" id="GO:0042832">
    <property type="term" value="P:defense response to protozoan"/>
    <property type="evidence" value="ECO:0000314"/>
    <property type="project" value="MGI"/>
</dbReference>
<dbReference type="GO" id="GO:0051607">
    <property type="term" value="P:defense response to virus"/>
    <property type="evidence" value="ECO:0000314"/>
    <property type="project" value="UniProtKB"/>
</dbReference>
<dbReference type="GO" id="GO:0001818">
    <property type="term" value="P:negative regulation of cytokine production"/>
    <property type="evidence" value="ECO:0000250"/>
    <property type="project" value="UniProtKB"/>
</dbReference>
<dbReference type="GO" id="GO:0046426">
    <property type="term" value="P:negative regulation of receptor signaling pathway via JAK-STAT"/>
    <property type="evidence" value="ECO:0000250"/>
    <property type="project" value="UniProtKB"/>
</dbReference>
<dbReference type="GO" id="GO:0032480">
    <property type="term" value="P:negative regulation of type I interferon production"/>
    <property type="evidence" value="ECO:0000250"/>
    <property type="project" value="UniProtKB"/>
</dbReference>
<dbReference type="GO" id="GO:0034345">
    <property type="term" value="P:negative regulation of type III interferon production"/>
    <property type="evidence" value="ECO:0000250"/>
    <property type="project" value="UniProtKB"/>
</dbReference>
<dbReference type="GO" id="GO:0045070">
    <property type="term" value="P:positive regulation of viral genome replication"/>
    <property type="evidence" value="ECO:0000250"/>
    <property type="project" value="UniProtKB"/>
</dbReference>
<dbReference type="GO" id="GO:0043122">
    <property type="term" value="P:regulation of canonical NF-kappaB signal transduction"/>
    <property type="evidence" value="ECO:0000250"/>
    <property type="project" value="UniProtKB"/>
</dbReference>
<dbReference type="CDD" id="cd01851">
    <property type="entry name" value="GBP"/>
    <property type="match status" value="1"/>
</dbReference>
<dbReference type="CDD" id="cd16269">
    <property type="entry name" value="GBP_C"/>
    <property type="match status" value="1"/>
</dbReference>
<dbReference type="FunFam" id="1.20.1000.10:FF:000001">
    <property type="entry name" value="Guanylate binding protein 1"/>
    <property type="match status" value="1"/>
</dbReference>
<dbReference type="FunFam" id="3.40.50.300:FF:000422">
    <property type="entry name" value="Guanylate-binding protein 1"/>
    <property type="match status" value="1"/>
</dbReference>
<dbReference type="Gene3D" id="1.20.1000.10">
    <property type="entry name" value="Guanylate-binding protein, C-terminal domain"/>
    <property type="match status" value="1"/>
</dbReference>
<dbReference type="Gene3D" id="3.40.50.300">
    <property type="entry name" value="P-loop containing nucleotide triphosphate hydrolases"/>
    <property type="match status" value="1"/>
</dbReference>
<dbReference type="InterPro" id="IPR030386">
    <property type="entry name" value="G_GB1_RHD3_dom"/>
</dbReference>
<dbReference type="InterPro" id="IPR037684">
    <property type="entry name" value="GBP_C"/>
</dbReference>
<dbReference type="InterPro" id="IPR003191">
    <property type="entry name" value="Guanylate-bd/ATL_C"/>
</dbReference>
<dbReference type="InterPro" id="IPR036543">
    <property type="entry name" value="Guanylate-bd_C_sf"/>
</dbReference>
<dbReference type="InterPro" id="IPR015894">
    <property type="entry name" value="Guanylate-bd_N"/>
</dbReference>
<dbReference type="InterPro" id="IPR027417">
    <property type="entry name" value="P-loop_NTPase"/>
</dbReference>
<dbReference type="PANTHER" id="PTHR10751">
    <property type="entry name" value="GUANYLATE BINDING PROTEIN"/>
    <property type="match status" value="1"/>
</dbReference>
<dbReference type="Pfam" id="PF02263">
    <property type="entry name" value="GBP"/>
    <property type="match status" value="1"/>
</dbReference>
<dbReference type="Pfam" id="PF02841">
    <property type="entry name" value="GBP_C"/>
    <property type="match status" value="1"/>
</dbReference>
<dbReference type="SUPFAM" id="SSF48340">
    <property type="entry name" value="Interferon-induced guanylate-binding protein 1 (GBP1), C-terminal domain"/>
    <property type="match status" value="1"/>
</dbReference>
<dbReference type="SUPFAM" id="SSF52540">
    <property type="entry name" value="P-loop containing nucleoside triphosphate hydrolases"/>
    <property type="match status" value="1"/>
</dbReference>
<dbReference type="PROSITE" id="PS51715">
    <property type="entry name" value="G_GB1_RHD3"/>
    <property type="match status" value="1"/>
</dbReference>
<comment type="function">
    <text evidence="2 4 5 6 7 8">Interferon (IFN)-inducible GTPase that plays important roles in innate immunity against a diverse range of bacterial, viral and protozoan pathogens (PubMed:18025219, PubMed:21551061, PubMed:24739961, PubMed:31964735). Hydrolyzes GTP to GMP in two consecutive cleavage reactions and predominantly uses GTP and not GDP or GMP as the substrate (PubMed:21551061, PubMed:31689351). Following infection, recruited to the pathogen-containing vacuoles or vacuole-escaped bacteria and acts as a positive regulator of inflammasome assembly by promoting the release of inflammasome ligands from bacteria (PubMed:24739961). Acts by promoting lysis of pathogen-containing vacuoles, releasing pathogens into the cytosol (PubMed:24739961). Following pathogen release in the cytosol, promotes recruitment of proteins that mediate bacterial cytolysis, such as Gm12250/Irgb10: this liberates ligands that are detected by inflammasomes, such as lipopolysaccharide (LPS) that activates the non-canonical CASP4/CASP11 inflammasome or double-stranded DNA (dsDNA) that activates the AIM2 inflammasome (PubMed:24739961). Also promotes IFN-gamma-mediated host defense against bacterial infections by regulating oxidative responses and bacteriolytic peptide generation (PubMed:21551061). May help to assemble NADPH oxidase on phagosomal membranes by acting as a bridging protein between NADPH oxidase cytosolic subunits NCF2-NCF4 and the membrane subunits CYBA-CYBB (PubMed:21551061). Participates along with GBP1 in trafficking monoubiquinated protein cargo to autolysosomes for generating ubiquitin-derived antimicrobial peptides (PubMed:21551061). Facilitates influenza A virus replication by inhibiting the activation of NF-kappaB and JAK-STAT signaling pathways and the expression of type I, type III interferons and pro-inflammatory cytokines (By similarity). Confers protection to several pathogens, including the bacterial pathogens Listeria monocytogenes and Mycobacterium bovis BCG as well as the protozoan pathogen Toxoplasma gondii (PubMed:18025219, PubMed:21551061, PubMed:31964735). Required for disruption of the parasitophorous vacuole formed following T.gondii infection and subsequent killing of the parasite (PubMed:31964735).</text>
</comment>
<comment type="catalytic activity">
    <reaction evidence="5 7">
        <text>GTP + H2O = GDP + phosphate + H(+)</text>
        <dbReference type="Rhea" id="RHEA:19669"/>
        <dbReference type="ChEBI" id="CHEBI:15377"/>
        <dbReference type="ChEBI" id="CHEBI:15378"/>
        <dbReference type="ChEBI" id="CHEBI:37565"/>
        <dbReference type="ChEBI" id="CHEBI:43474"/>
        <dbReference type="ChEBI" id="CHEBI:58189"/>
    </reaction>
    <physiologicalReaction direction="left-to-right" evidence="5 7">
        <dbReference type="Rhea" id="RHEA:19670"/>
    </physiologicalReaction>
</comment>
<comment type="catalytic activity">
    <reaction evidence="5 7">
        <text>GDP + H2O = GMP + phosphate + H(+)</text>
        <dbReference type="Rhea" id="RHEA:22156"/>
        <dbReference type="ChEBI" id="CHEBI:15377"/>
        <dbReference type="ChEBI" id="CHEBI:15378"/>
        <dbReference type="ChEBI" id="CHEBI:43474"/>
        <dbReference type="ChEBI" id="CHEBI:58115"/>
        <dbReference type="ChEBI" id="CHEBI:58189"/>
    </reaction>
    <physiologicalReaction direction="left-to-right" evidence="5 7">
        <dbReference type="Rhea" id="RHEA:22157"/>
    </physiologicalReaction>
</comment>
<comment type="activity regulation">
    <text evidence="7">Inhibited by orthovanadate, berylium fluoride and aluminum flouride.</text>
</comment>
<comment type="biophysicochemical properties">
    <kinetics>
        <KM evidence="7">207 uM for GTP</KM>
        <Vmax evidence="7">278.0 nmol/min/mg enzyme toward GTP</Vmax>
    </kinetics>
</comment>
<comment type="subunit">
    <text evidence="5 7">Monomer and dimer (PubMed:31689351). Interacts with CYBA, CYBA-CYBB complex and ATG4B (PubMed:21551061). Interacts (via GB1/RHD3-type G domain) with NCF2 and NCF2-NCF4 complex (PubMed:21551061).</text>
</comment>
<comment type="subcellular location">
    <subcellularLocation>
        <location evidence="4 5 7 8">Cytoplasmic vesicle membrane</location>
    </subcellularLocation>
</comment>
<comment type="induction">
    <text evidence="4 9">By IFNG/IFN-gamma and IFNB1/IFN-beta (PubMed:18025219). Up-regulated upon infection by T.gondii or L.monocytogenes (PubMed:18025219). Up-regulated in response to influenza virus A infection (PubMed:33408175).</text>
</comment>
<comment type="disruption phenotype">
    <text evidence="8">Mice show a dramatic susceptibility to T.gondii infection, resulting in rapid death of infected mice in the acute phase of infection. A significantly increased parasite load seen in the spleen, liver and the peritoneal fluid, with markedly elevated production of pro-inflammatory cytokines and development of severe ascites.</text>
</comment>
<comment type="similarity">
    <text evidence="3">Belongs to the TRAFAC class dynamin-like GTPase superfamily. GB1/RHD3 GTPase family. GB1 subfamily.</text>
</comment>
<comment type="sequence caution" evidence="10">
    <conflict type="erroneous initiation">
        <sequence resource="EMBL-CDS" id="BAC29526"/>
    </conflict>
    <text>Truncated N-terminus.</text>
</comment>
<comment type="sequence caution" evidence="10">
    <conflict type="erroneous initiation">
        <sequence resource="EMBL-CDS" id="BAD21426"/>
    </conflict>
    <text>Extended N-terminus.</text>
</comment>
<proteinExistence type="evidence at protein level"/>
<gene>
    <name type="primary">Gbp7</name>
    <name type="synonym">Gbp4l</name>
</gene>
<protein>
    <recommendedName>
        <fullName>Guanylate-binding protein 7</fullName>
        <ecNumber evidence="5 7">3.6.1.-</ecNumber>
        <ecNumber evidence="5 7">3.6.5.-</ecNumber>
    </recommendedName>
    <alternativeName>
        <fullName>GTP-binding protein 7</fullName>
        <shortName>GBP-7</shortName>
    </alternativeName>
    <alternativeName>
        <fullName>Guanine nucleotide-binding protein 7</fullName>
    </alternativeName>
    <alternativeName>
        <fullName>Guanylate-binding protein 4-like</fullName>
    </alternativeName>
</protein>
<accession>Q91Z40</accession>
<accession>Q6KAN1</accession>
<accession>Q78UK8</accession>
<accession>Q8BU48</accession>
<sequence>MASGPNMEAPVCLVENENEELRVNSKAINILERITQPVVVVAIVGLYRTGKSYLMNRLAGQNHGFNLGTTVRSETKGIWMWCVPHPSKPKFTLVLLDTEGLGDVEKGDPKNDSWIFALAVLLSSTFVYNSMSTINHQALEQLHYVTELTERIRAKSTSRSEEVDDSDEFVSFFPDFIWTVRDFVLELKLEGRVITADEYLENALKLIPGMSIKAQKANLPRECIRHFFPRRKCFVFDRPTKDKELLVHVEEMPEDQLDHSFQVQSKEFCSYIFSNSKAKTLKEGIVVNGNRLATLVTTYVDAINSGDVPCLENAVTTLAQRENSIAVQKAADHYSEQMAQRMRLPTDTLQELLTVHTACEKEAIAVFMEHSFKDENQQFQKNLVVTIEEKKEDFLRQNEAASLSHCQAELDKLSESLRESISRGVFSVPGGHRLYLEARKKVEQDYERVPRKGVKANHVLQSFLQSQISIEDSIMQSDKALTDGQKAMEAERAQKEAAEKEQELLRQKQKELQQVMEAQERSYKENVAQLHEKMETERKNILREQEVKLEHKLKIQKDMLNEGFKRKCEAMDLEISQLQKEIQLNKEKNSSLGAKILDGFGDVLISVVPGSGKYFGLGLKILSSQMNQTQNSDKVRKL</sequence>
<name>GBP7_MOUSE</name>